<sequence length="621" mass="71968">MEHIRTTKVEQVKLLDRFSTSNKSLTGTLYLTATHLLFIDSHQKETWILHHHIASVEKLALTTSGCPLVIQCKNFRTVHFIVPRERDCHDIYNSLLQLSKQAKYEDLYAFSYNPKQNDSERLQGWQLIDLAEEYKRMGVPNSHWQLSDANRDYKICETYPRELYVPRIASKPIIVGSSKFRSKGRFPVLSYYHQDKEAAICRCSQPLSGFSARCLEDEHLLQAISKANPVNRYMYVMDTRPKLNAMANRAAGKGYENEDNYSNIRFQFVGIENIHVMRSSLQKLLEVNGTKGLSVNDFYSGLESSGWLRHIKAVMDAAIFLAKAITVENASVLVHCSDGWDRTSQVCSLGSLLLDSYYRTIKGFMVLIEKDWISFGHKFSERCGQLDGDPKEVSPVFTQFLECVWHLTEQFPQAFEFSEAFLLQIHEHIHSCQFGNFLGNCQKEREELKLKEKTYSLWPFLLEDQKKYLNPLYSSESHRFTVLEPNTVSFNFKFWRNMYHQFDRTLHPRQSVFNIIMNMNEQNKQLEKDIKDLESKIKQRKNKQTDGILTKELLHSVHPESPNLKTSLCFKEQTLLPVNDALRTIEGSSPADNRYSEYAEEFSKSEPAVVSLEYGVARMTC</sequence>
<keyword id="KW-0002">3D-structure</keyword>
<keyword id="KW-0025">Alternative splicing</keyword>
<keyword id="KW-1003">Cell membrane</keyword>
<keyword id="KW-0966">Cell projection</keyword>
<keyword id="KW-0963">Cytoplasm</keyword>
<keyword id="KW-0254">Endocytosis</keyword>
<keyword id="KW-0256">Endoplasmic reticulum</keyword>
<keyword id="KW-0378">Hydrolase</keyword>
<keyword id="KW-0443">Lipid metabolism</keyword>
<keyword id="KW-0472">Membrane</keyword>
<keyword id="KW-0597">Phosphoprotein</keyword>
<keyword id="KW-1267">Proteomics identification</keyword>
<keyword id="KW-1185">Reference proteome</keyword>
<accession>Q9Y217</accession>
<accession>B2RBB5</accession>
<accession>B3KSB4</accession>
<accession>Q5JRG6</accession>
<accession>Q86TB7</accession>
<accession>Q86YH4</accession>
<accession>Q96P80</accession>
<comment type="function">
    <text evidence="1 11 13 15 16 19 25">Lipid phosphatase that specifically dephosphorylates the D-3 position of phosphatidylinositol 3-phosphate and phosphatidylinositol 3,5-bisphosphate, generating phosphatidylinositol and phosphatidylinositol 5-phosphate (PubMed:19038970, PubMed:22647598). Binds with high affinity to phosphatidylinositol 3,5-bisphosphate (PtdIns(3,5)P2) but also to phosphatidylinositol 3-phosphate (PtdIns(3)P), phosphatidylinositol 4-phosphate (PtdIns(4)P), and phosphatidylinositol 5-phosphate (PtdIns(5)P), phosphatidic acid and phosphatidylserine (PubMed:19038970). Negatively regulates ER-Golgi protein transport (By similarity). Probably in association with MTMR9, plays a role in the late stages of macropinocytosis by dephosphorylating phosphatidylinositol 3-phosphate in membrane ruffles (PubMed:24591580). Acts as a negative regulator of KCNN4/KCa3.1 channel activity in CD4(+) T-cells possibly by decreasing intracellular levels of phosphatidylinositol 3-phosphate (PubMed:15831468). Negatively regulates proliferation of reactivated CD4(+) T-cells (PubMed:16847315). In complex with MTMR9, negatively regulates DNA damage-induced apoptosis (PubMed:19038970, PubMed:22647598). The formation of the MTMR6-MTMR9 complex stabilizes both MTMR6 and MTMR9 protein levels (PubMed:19038970).</text>
</comment>
<comment type="catalytic activity">
    <reaction evidence="16">
        <text>a 1,2-diacyl-sn-glycero-3-phospho-(1D-myo-inositol-3,5-bisphosphate) + H2O = a 1,2-diacyl-sn-glycero-3-phospho-(1D-myo-inositol-5-phosphate) + phosphate</text>
        <dbReference type="Rhea" id="RHEA:39019"/>
        <dbReference type="ChEBI" id="CHEBI:15377"/>
        <dbReference type="ChEBI" id="CHEBI:43474"/>
        <dbReference type="ChEBI" id="CHEBI:57795"/>
        <dbReference type="ChEBI" id="CHEBI:57923"/>
        <dbReference type="EC" id="3.1.3.95"/>
    </reaction>
</comment>
<comment type="catalytic activity">
    <reaction evidence="15 16 25">
        <text>a 1,2-diacyl-sn-glycero-3-phospho-(1D-myo-inositol-3-phosphate) + H2O = a 1,2-diacyl-sn-glycero-3-phospho-(1D-myo-inositol) + phosphate</text>
        <dbReference type="Rhea" id="RHEA:12316"/>
        <dbReference type="ChEBI" id="CHEBI:15377"/>
        <dbReference type="ChEBI" id="CHEBI:43474"/>
        <dbReference type="ChEBI" id="CHEBI:57880"/>
        <dbReference type="ChEBI" id="CHEBI:58088"/>
    </reaction>
</comment>
<comment type="catalytic activity">
    <reaction evidence="7">
        <text>1,2-dioctanoyl-sn-glycero-3-phospho-(1D-myo-inositol-3,5-bisphosphate) + H2O = 1,2-dioctanoyl-sn-glycero-3-phospho-(1D-myo-inositol-5-phosphate) + phosphate</text>
        <dbReference type="Rhea" id="RHEA:45632"/>
        <dbReference type="ChEBI" id="CHEBI:15377"/>
        <dbReference type="ChEBI" id="CHEBI:43474"/>
        <dbReference type="ChEBI" id="CHEBI:78911"/>
        <dbReference type="ChEBI" id="CHEBI:85342"/>
    </reaction>
</comment>
<comment type="catalytic activity">
    <reaction evidence="7">
        <text>1,2-dioctanoyl-sn-glycero-3-phospho-(1-D-myo-inositol-3-phosphate) + H2O = 1,2-dioctanoyl-sn-glycero-3-phospho-(1D-myo-inositol) + phosphate</text>
        <dbReference type="Rhea" id="RHEA:42328"/>
        <dbReference type="ChEBI" id="CHEBI:15377"/>
        <dbReference type="ChEBI" id="CHEBI:43474"/>
        <dbReference type="ChEBI" id="CHEBI:65221"/>
        <dbReference type="ChEBI" id="CHEBI:78934"/>
    </reaction>
</comment>
<comment type="activity regulation">
    <text evidence="15">Allosterically activated by phosphatidylserine and/or phosphatidylinositol 4-phosphate (PtdIns(4)P), and phosphatidylinositol 5-phosphate (PtdIns(5)P) (PubMed:19038970). Interaction with MTMR9 increases catalytic activity towards phosphatidylinositol 3,5-bisphosphate (PubMed:19038970).</text>
</comment>
<comment type="biophysicochemical properties">
    <phDependence>
        <text evidence="15">Optimum pH is 7.</text>
    </phDependence>
</comment>
<comment type="subunit">
    <text evidence="8 11 12 15 17 18">Homodimer (PubMed:19038970). Heterodimer (via C-terminus) with MTMR9 (via C-terminus) (PubMed:12890864, PubMed:16787938, PubMed:19038970, PubMed:23188820). Interacts with ALKBH4 (PubMed:23145062). Interacts with KCNN4 (PubMed:15831468). Interacts (via GRAM domain) with RAB1B (in GDP-bound form); the interaction regulates MTMR6 recruitment to the endoplasmic reticulum-Golgi intermediate compartment (PubMed:23188820).</text>
</comment>
<comment type="interaction">
    <interactant intactId="EBI-766064">
        <id>Q9Y217</id>
    </interactant>
    <interactant intactId="EBI-10187270">
        <id>Q9Y2J4-4</id>
        <label>AMOTL2</label>
    </interactant>
    <organismsDiffer>false</organismsDiffer>
    <experiments>3</experiments>
</comment>
<comment type="interaction">
    <interactant intactId="EBI-766064">
        <id>Q9Y217</id>
    </interactant>
    <interactant intactId="EBI-744593">
        <id>Q96QG7</id>
        <label>MTMR9</label>
    </interactant>
    <organismsDiffer>false</organismsDiffer>
    <experiments>14</experiments>
</comment>
<comment type="interaction">
    <interactant intactId="EBI-766064">
        <id>Q9Y217</id>
    </interactant>
    <interactant intactId="EBI-742948">
        <id>Q5JR59</id>
        <label>MTUS2</label>
    </interactant>
    <organismsDiffer>false</organismsDiffer>
    <experiments>3</experiments>
</comment>
<comment type="interaction">
    <interactant intactId="EBI-766064">
        <id>Q9Y217</id>
    </interactant>
    <interactant intactId="EBI-372942">
        <id>Q13287</id>
        <label>NMI</label>
    </interactant>
    <organismsDiffer>false</organismsDiffer>
    <experiments>6</experiments>
</comment>
<comment type="interaction">
    <interactant intactId="EBI-766064">
        <id>Q9Y217</id>
    </interactant>
    <interactant intactId="EBI-719493">
        <id>P14373</id>
        <label>TRIM27</label>
    </interactant>
    <organismsDiffer>false</organismsDiffer>
    <experiments>3</experiments>
</comment>
<comment type="subcellular location">
    <subcellularLocation>
        <location evidence="15">Cytoplasm</location>
    </subcellularLocation>
    <subcellularLocation>
        <location evidence="12 15">Endoplasmic reticulum-Golgi intermediate compartment</location>
    </subcellularLocation>
    <subcellularLocation>
        <location evidence="15">Endoplasmic reticulum</location>
    </subcellularLocation>
    <subcellularLocation>
        <location evidence="3">Cell projection</location>
        <location evidence="3">Ruffle membrane</location>
        <topology evidence="23">Peripheral membrane protein</topology>
        <orientation evidence="23">Cytoplasmic side</orientation>
    </subcellularLocation>
    <subcellularLocation>
        <location evidence="15">Cytoplasm</location>
        <location evidence="15">Perinuclear region</location>
    </subcellularLocation>
    <text evidence="1 3 15">Localizes to ruffles during EGF-induced macropinocytosis (By similarity). Colocalizes with MTMR9 to the perinuclear region (PubMed:19038970). Partially localizes to the endoplasmic reticulum (PubMed:19038970). Co-localizes with RAB1B to the endoplasmic reticulum-Golgi intermediate compartment and to the peri-Golgi region (By similarity).</text>
</comment>
<comment type="alternative products">
    <event type="alternative splicing"/>
    <isoform>
        <id>Q9Y217-1</id>
        <name>1</name>
        <sequence type="displayed"/>
    </isoform>
    <isoform>
        <id>Q9Y217-2</id>
        <name>2</name>
        <sequence type="described" ref="VSP_036614 VSP_036615"/>
    </isoform>
</comment>
<comment type="tissue specificity">
    <text evidence="13">Expressed in CD4+ T-cells.</text>
</comment>
<comment type="domain">
    <text evidence="3">The GRAM domain is required for cell membrane localization.</text>
</comment>
<comment type="domain">
    <text evidence="3">The C-terminus domain (aa 502-621) mediates interaction with MTMR9.</text>
</comment>
<comment type="similarity">
    <text evidence="23">Belongs to the protein-tyrosine phosphatase family. Non-receptor class myotubularin subfamily.</text>
</comment>
<reference key="1">
    <citation type="journal article" date="2003" name="Proc. Natl. Acad. Sci. U.S.A.">
        <title>Characterization of myotubularin-related protein 7 and its binding partner, myotubularin-related protein 9.</title>
        <authorList>
            <person name="Mochizuki Y."/>
            <person name="Majerus P.W."/>
        </authorList>
    </citation>
    <scope>NUCLEOTIDE SEQUENCE [MRNA] (ISOFORM 1)</scope>
    <scope>INTERACTION WITH MTMR9</scope>
</reference>
<reference key="2">
    <citation type="submission" date="2001-08" db="EMBL/GenBank/DDBJ databases">
        <authorList>
            <person name="Hong W."/>
        </authorList>
    </citation>
    <scope>NUCLEOTIDE SEQUENCE [MRNA] (ISOFORM 1)</scope>
    <scope>VARIANT VAL-319</scope>
</reference>
<reference key="3">
    <citation type="journal article" date="2004" name="Nat. Genet.">
        <title>Complete sequencing and characterization of 21,243 full-length human cDNAs.</title>
        <authorList>
            <person name="Ota T."/>
            <person name="Suzuki Y."/>
            <person name="Nishikawa T."/>
            <person name="Otsuki T."/>
            <person name="Sugiyama T."/>
            <person name="Irie R."/>
            <person name="Wakamatsu A."/>
            <person name="Hayashi K."/>
            <person name="Sato H."/>
            <person name="Nagai K."/>
            <person name="Kimura K."/>
            <person name="Makita H."/>
            <person name="Sekine M."/>
            <person name="Obayashi M."/>
            <person name="Nishi T."/>
            <person name="Shibahara T."/>
            <person name="Tanaka T."/>
            <person name="Ishii S."/>
            <person name="Yamamoto J."/>
            <person name="Saito K."/>
            <person name="Kawai Y."/>
            <person name="Isono Y."/>
            <person name="Nakamura Y."/>
            <person name="Nagahari K."/>
            <person name="Murakami K."/>
            <person name="Yasuda T."/>
            <person name="Iwayanagi T."/>
            <person name="Wagatsuma M."/>
            <person name="Shiratori A."/>
            <person name="Sudo H."/>
            <person name="Hosoiri T."/>
            <person name="Kaku Y."/>
            <person name="Kodaira H."/>
            <person name="Kondo H."/>
            <person name="Sugawara M."/>
            <person name="Takahashi M."/>
            <person name="Kanda K."/>
            <person name="Yokoi T."/>
            <person name="Furuya T."/>
            <person name="Kikkawa E."/>
            <person name="Omura Y."/>
            <person name="Abe K."/>
            <person name="Kamihara K."/>
            <person name="Katsuta N."/>
            <person name="Sato K."/>
            <person name="Tanikawa M."/>
            <person name="Yamazaki M."/>
            <person name="Ninomiya K."/>
            <person name="Ishibashi T."/>
            <person name="Yamashita H."/>
            <person name="Murakawa K."/>
            <person name="Fujimori K."/>
            <person name="Tanai H."/>
            <person name="Kimata M."/>
            <person name="Watanabe M."/>
            <person name="Hiraoka S."/>
            <person name="Chiba Y."/>
            <person name="Ishida S."/>
            <person name="Ono Y."/>
            <person name="Takiguchi S."/>
            <person name="Watanabe S."/>
            <person name="Yosida M."/>
            <person name="Hotuta T."/>
            <person name="Kusano J."/>
            <person name="Kanehori K."/>
            <person name="Takahashi-Fujii A."/>
            <person name="Hara H."/>
            <person name="Tanase T.-O."/>
            <person name="Nomura Y."/>
            <person name="Togiya S."/>
            <person name="Komai F."/>
            <person name="Hara R."/>
            <person name="Takeuchi K."/>
            <person name="Arita M."/>
            <person name="Imose N."/>
            <person name="Musashino K."/>
            <person name="Yuuki H."/>
            <person name="Oshima A."/>
            <person name="Sasaki N."/>
            <person name="Aotsuka S."/>
            <person name="Yoshikawa Y."/>
            <person name="Matsunawa H."/>
            <person name="Ichihara T."/>
            <person name="Shiohata N."/>
            <person name="Sano S."/>
            <person name="Moriya S."/>
            <person name="Momiyama H."/>
            <person name="Satoh N."/>
            <person name="Takami S."/>
            <person name="Terashima Y."/>
            <person name="Suzuki O."/>
            <person name="Nakagawa S."/>
            <person name="Senoh A."/>
            <person name="Mizoguchi H."/>
            <person name="Goto Y."/>
            <person name="Shimizu F."/>
            <person name="Wakebe H."/>
            <person name="Hishigaki H."/>
            <person name="Watanabe T."/>
            <person name="Sugiyama A."/>
            <person name="Takemoto M."/>
            <person name="Kawakami B."/>
            <person name="Yamazaki M."/>
            <person name="Watanabe K."/>
            <person name="Kumagai A."/>
            <person name="Itakura S."/>
            <person name="Fukuzumi Y."/>
            <person name="Fujimori Y."/>
            <person name="Komiyama M."/>
            <person name="Tashiro H."/>
            <person name="Tanigami A."/>
            <person name="Fujiwara T."/>
            <person name="Ono T."/>
            <person name="Yamada K."/>
            <person name="Fujii Y."/>
            <person name="Ozaki K."/>
            <person name="Hirao M."/>
            <person name="Ohmori Y."/>
            <person name="Kawabata A."/>
            <person name="Hikiji T."/>
            <person name="Kobatake N."/>
            <person name="Inagaki H."/>
            <person name="Ikema Y."/>
            <person name="Okamoto S."/>
            <person name="Okitani R."/>
            <person name="Kawakami T."/>
            <person name="Noguchi S."/>
            <person name="Itoh T."/>
            <person name="Shigeta K."/>
            <person name="Senba T."/>
            <person name="Matsumura K."/>
            <person name="Nakajima Y."/>
            <person name="Mizuno T."/>
            <person name="Morinaga M."/>
            <person name="Sasaki M."/>
            <person name="Togashi T."/>
            <person name="Oyama M."/>
            <person name="Hata H."/>
            <person name="Watanabe M."/>
            <person name="Komatsu T."/>
            <person name="Mizushima-Sugano J."/>
            <person name="Satoh T."/>
            <person name="Shirai Y."/>
            <person name="Takahashi Y."/>
            <person name="Nakagawa K."/>
            <person name="Okumura K."/>
            <person name="Nagase T."/>
            <person name="Nomura N."/>
            <person name="Kikuchi H."/>
            <person name="Masuho Y."/>
            <person name="Yamashita R."/>
            <person name="Nakai K."/>
            <person name="Yada T."/>
            <person name="Nakamura Y."/>
            <person name="Ohara O."/>
            <person name="Isogai T."/>
            <person name="Sugano S."/>
        </authorList>
    </citation>
    <scope>NUCLEOTIDE SEQUENCE [LARGE SCALE MRNA] (ISOFORMS 1 AND 2)</scope>
    <scope>VARIANT VAL-319</scope>
    <source>
        <tissue>Testis</tissue>
        <tissue>Trachea</tissue>
    </source>
</reference>
<reference key="4">
    <citation type="journal article" date="2007" name="BMC Genomics">
        <title>The full-ORF clone resource of the German cDNA consortium.</title>
        <authorList>
            <person name="Bechtel S."/>
            <person name="Rosenfelder H."/>
            <person name="Duda A."/>
            <person name="Schmidt C.P."/>
            <person name="Ernst U."/>
            <person name="Wellenreuther R."/>
            <person name="Mehrle A."/>
            <person name="Schuster C."/>
            <person name="Bahr A."/>
            <person name="Bloecker H."/>
            <person name="Heubner D."/>
            <person name="Hoerlein A."/>
            <person name="Michel G."/>
            <person name="Wedler H."/>
            <person name="Koehrer K."/>
            <person name="Ottenwaelder B."/>
            <person name="Poustka A."/>
            <person name="Wiemann S."/>
            <person name="Schupp I."/>
        </authorList>
    </citation>
    <scope>NUCLEOTIDE SEQUENCE [LARGE SCALE MRNA] (ISOFORM 1)</scope>
    <scope>VARIANT VAL-319</scope>
    <source>
        <tissue>Skeletal muscle</tissue>
    </source>
</reference>
<reference key="5">
    <citation type="journal article" date="2004" name="Nature">
        <title>The DNA sequence and analysis of human chromosome 13.</title>
        <authorList>
            <person name="Dunham A."/>
            <person name="Matthews L.H."/>
            <person name="Burton J."/>
            <person name="Ashurst J.L."/>
            <person name="Howe K.L."/>
            <person name="Ashcroft K.J."/>
            <person name="Beare D.M."/>
            <person name="Burford D.C."/>
            <person name="Hunt S.E."/>
            <person name="Griffiths-Jones S."/>
            <person name="Jones M.C."/>
            <person name="Keenan S.J."/>
            <person name="Oliver K."/>
            <person name="Scott C.E."/>
            <person name="Ainscough R."/>
            <person name="Almeida J.P."/>
            <person name="Ambrose K.D."/>
            <person name="Andrews D.T."/>
            <person name="Ashwell R.I.S."/>
            <person name="Babbage A.K."/>
            <person name="Bagguley C.L."/>
            <person name="Bailey J."/>
            <person name="Bannerjee R."/>
            <person name="Barlow K.F."/>
            <person name="Bates K."/>
            <person name="Beasley H."/>
            <person name="Bird C.P."/>
            <person name="Bray-Allen S."/>
            <person name="Brown A.J."/>
            <person name="Brown J.Y."/>
            <person name="Burrill W."/>
            <person name="Carder C."/>
            <person name="Carter N.P."/>
            <person name="Chapman J.C."/>
            <person name="Clamp M.E."/>
            <person name="Clark S.Y."/>
            <person name="Clarke G."/>
            <person name="Clee C.M."/>
            <person name="Clegg S.C."/>
            <person name="Cobley V."/>
            <person name="Collins J.E."/>
            <person name="Corby N."/>
            <person name="Coville G.J."/>
            <person name="Deloukas P."/>
            <person name="Dhami P."/>
            <person name="Dunham I."/>
            <person name="Dunn M."/>
            <person name="Earthrowl M.E."/>
            <person name="Ellington A.G."/>
            <person name="Faulkner L."/>
            <person name="Frankish A.G."/>
            <person name="Frankland J."/>
            <person name="French L."/>
            <person name="Garner P."/>
            <person name="Garnett J."/>
            <person name="Gilbert J.G.R."/>
            <person name="Gilson C.J."/>
            <person name="Ghori J."/>
            <person name="Grafham D.V."/>
            <person name="Gribble S.M."/>
            <person name="Griffiths C."/>
            <person name="Hall R.E."/>
            <person name="Hammond S."/>
            <person name="Harley J.L."/>
            <person name="Hart E.A."/>
            <person name="Heath P.D."/>
            <person name="Howden P.J."/>
            <person name="Huckle E.J."/>
            <person name="Hunt P.J."/>
            <person name="Hunt A.R."/>
            <person name="Johnson C."/>
            <person name="Johnson D."/>
            <person name="Kay M."/>
            <person name="Kimberley A.M."/>
            <person name="King A."/>
            <person name="Laird G.K."/>
            <person name="Langford C.J."/>
            <person name="Lawlor S."/>
            <person name="Leongamornlert D.A."/>
            <person name="Lloyd D.M."/>
            <person name="Lloyd C."/>
            <person name="Loveland J.E."/>
            <person name="Lovell J."/>
            <person name="Martin S."/>
            <person name="Mashreghi-Mohammadi M."/>
            <person name="McLaren S.J."/>
            <person name="McMurray A."/>
            <person name="Milne S."/>
            <person name="Moore M.J.F."/>
            <person name="Nickerson T."/>
            <person name="Palmer S.A."/>
            <person name="Pearce A.V."/>
            <person name="Peck A.I."/>
            <person name="Pelan S."/>
            <person name="Phillimore B."/>
            <person name="Porter K.M."/>
            <person name="Rice C.M."/>
            <person name="Searle S."/>
            <person name="Sehra H.K."/>
            <person name="Shownkeen R."/>
            <person name="Skuce C.D."/>
            <person name="Smith M."/>
            <person name="Steward C.A."/>
            <person name="Sycamore N."/>
            <person name="Tester J."/>
            <person name="Thomas D.W."/>
            <person name="Tracey A."/>
            <person name="Tromans A."/>
            <person name="Tubby B."/>
            <person name="Wall M."/>
            <person name="Wallis J.M."/>
            <person name="West A.P."/>
            <person name="Whitehead S.L."/>
            <person name="Willey D.L."/>
            <person name="Wilming L."/>
            <person name="Wray P.W."/>
            <person name="Wright M.W."/>
            <person name="Young L."/>
            <person name="Coulson A."/>
            <person name="Durbin R.M."/>
            <person name="Hubbard T."/>
            <person name="Sulston J.E."/>
            <person name="Beck S."/>
            <person name="Bentley D.R."/>
            <person name="Rogers J."/>
            <person name="Ross M.T."/>
        </authorList>
    </citation>
    <scope>NUCLEOTIDE SEQUENCE [LARGE SCALE GENOMIC DNA]</scope>
</reference>
<reference key="6">
    <citation type="journal article" date="2004" name="Genome Res.">
        <title>The status, quality, and expansion of the NIH full-length cDNA project: the Mammalian Gene Collection (MGC).</title>
        <authorList>
            <consortium name="The MGC Project Team"/>
        </authorList>
    </citation>
    <scope>NUCLEOTIDE SEQUENCE [LARGE SCALE MRNA] (ISOFORM 1)</scope>
    <scope>VARIANT VAL-319</scope>
    <source>
        <tissue>Eye</tissue>
    </source>
</reference>
<reference key="7">
    <citation type="journal article" date="1998" name="Hum. Mol. Genet.">
        <title>Characterization of the myotubularin dual specificity phosphatase gene family from yeast to human.</title>
        <authorList>
            <person name="Laporte J."/>
            <person name="Blondeau F."/>
            <person name="Buj-Bello A."/>
            <person name="Tentler D."/>
            <person name="Kretz C."/>
            <person name="Dahl N."/>
            <person name="Mandel J.-L."/>
        </authorList>
    </citation>
    <scope>NUCLEOTIDE SEQUENCE [MRNA] OF 157-621 (ISOFORM 1)</scope>
    <scope>VARIANT VAL-319</scope>
</reference>
<reference key="8">
    <citation type="journal article" date="2003" name="Curr. Biol.">
        <title>Phosphatidylinositol-5-phosphate activation and conserved substrate specificity of the myotubularin phosphatidylinositol 3-phosphatases.</title>
        <authorList>
            <person name="Schaletzky J."/>
            <person name="Dove S.K."/>
            <person name="Short B."/>
            <person name="Lorenzo O."/>
            <person name="Clague M.J."/>
            <person name="Barr F.A."/>
        </authorList>
    </citation>
    <scope>CATALYTIC ACTIVITY</scope>
</reference>
<reference key="9">
    <citation type="journal article" date="2005" name="Mol. Cell. Biol.">
        <title>The phosphatidylinositol 3-phosphate phosphatase myotubularin-related protein 6 (MTMR6) is a negative regulator of the Ca2+-activated K+ channel KCa3.1.</title>
        <authorList>
            <person name="Srivastava S."/>
            <person name="Li Z."/>
            <person name="Lin L."/>
            <person name="Liu G."/>
            <person name="Ko K."/>
            <person name="Coetzee W.A."/>
            <person name="Skolnik E.Y."/>
        </authorList>
    </citation>
    <scope>FUNCTION</scope>
    <scope>INTERACTION WITH KCNN4</scope>
</reference>
<reference key="10">
    <citation type="journal article" date="2006" name="J. Cell Sci.">
        <title>Systematic analysis of myotubularins: heteromeric interactions, subcellular localisation and endosome related functions.</title>
        <authorList>
            <person name="Lorenzo O."/>
            <person name="Urbe S."/>
            <person name="Clague M.J."/>
        </authorList>
    </citation>
    <scope>SUBCELLULAR LOCATION</scope>
    <scope>INTERACTION WITH MTMR9</scope>
</reference>
<reference key="11">
    <citation type="journal article" date="2006" name="Mol. Cell. Biol.">
        <title>Phosphatidylinositol-3 phosphatase myotubularin-related protein 6 negatively regulates CD4 T cells.</title>
        <authorList>
            <person name="Srivastava S."/>
            <person name="Ko K."/>
            <person name="Choudhury P."/>
            <person name="Li Z."/>
            <person name="Johnson A.K."/>
            <person name="Nadkarni V."/>
            <person name="Unutmaz D."/>
            <person name="Coetzee W.A."/>
            <person name="Skolnik E.Y."/>
        </authorList>
    </citation>
    <scope>FUNCTION</scope>
    <scope>TISSUE SPECIFICITY</scope>
</reference>
<reference key="12">
    <citation type="journal article" date="2008" name="Proc. Natl. Acad. Sci. U.S.A.">
        <title>A quantitative atlas of mitotic phosphorylation.</title>
        <authorList>
            <person name="Dephoure N."/>
            <person name="Zhou C."/>
            <person name="Villen J."/>
            <person name="Beausoleil S.A."/>
            <person name="Bakalarski C.E."/>
            <person name="Elledge S.J."/>
            <person name="Gygi S.P."/>
        </authorList>
    </citation>
    <scope>PHOSPHORYLATION [LARGE SCALE ANALYSIS] AT SER-561 AND SER-589</scope>
    <scope>IDENTIFICATION BY MASS SPECTROMETRY [LARGE SCALE ANALYSIS]</scope>
    <source>
        <tissue>Cervix carcinoma</tissue>
    </source>
</reference>
<reference key="13">
    <citation type="journal article" date="2009" name="J. Biol. Chem.">
        <title>MTMR9 increases MTMR6 enzyme activity, stability, and role in apoptosis.</title>
        <authorList>
            <person name="Zou J."/>
            <person name="Chang S.C."/>
            <person name="Marjanovic J."/>
            <person name="Majerus P.W."/>
        </authorList>
    </citation>
    <scope>FUNCTION</scope>
    <scope>CATALYTIC ACTIVITY</scope>
    <scope>ACTIVITY REGULATION</scope>
    <scope>BIOPHYSICOCHEMICAL PROPERTIES</scope>
    <scope>INTERACTION WITH MTMR9</scope>
    <scope>SUBUNIT</scope>
    <scope>SUBCELLULAR LOCATION</scope>
</reference>
<reference key="14">
    <citation type="journal article" date="2012" name="PLoS ONE">
        <title>Human ALKBH4 interacts with proteins associated with transcription.</title>
        <authorList>
            <person name="Bjornstad L.G."/>
            <person name="Meza T.J."/>
            <person name="Otterlei M."/>
            <person name="Olafsrud S.M."/>
            <person name="Meza-Zepeda L.A."/>
            <person name="Falnes P.O."/>
        </authorList>
    </citation>
    <scope>INTERACTION WITH ALKBH4</scope>
</reference>
<reference key="15">
    <citation type="journal article" date="2012" name="Proc. Natl. Acad. Sci. U.S.A.">
        <title>Myotubularin-related protein (MTMR) 9 determines the enzymatic activity, substrate specificity, and role in autophagy of MTMR8.</title>
        <authorList>
            <person name="Zou J."/>
            <person name="Zhang C."/>
            <person name="Marjanovic J."/>
            <person name="Kisseleva M.V."/>
            <person name="Majerus P.W."/>
            <person name="Wilson M.P."/>
        </authorList>
    </citation>
    <scope>FUNCTION</scope>
    <scope>CATALYTIC ACTIVITY</scope>
</reference>
<reference key="16">
    <citation type="journal article" date="2013" name="J. Biol. Chem.">
        <title>Phosphatidylinositol 3-phosphatase myotubularin-related protein 6 (MTMR6) is regulated by small GTPase Rab1B in the early secretory and autophagic pathways.</title>
        <authorList>
            <person name="Mochizuki Y."/>
            <person name="Ohashi R."/>
            <person name="Kawamura T."/>
            <person name="Iwanari H."/>
            <person name="Kodama T."/>
            <person name="Naito M."/>
            <person name="Hamakubo T."/>
        </authorList>
    </citation>
    <scope>INTERACTION WITH MTMR9 AND RAB1B</scope>
    <scope>IDENTIFICATION BY MASS SPECTROMETRY</scope>
</reference>
<reference key="17">
    <citation type="journal article" date="2013" name="J. Proteome Res.">
        <title>Toward a comprehensive characterization of a human cancer cell phosphoproteome.</title>
        <authorList>
            <person name="Zhou H."/>
            <person name="Di Palma S."/>
            <person name="Preisinger C."/>
            <person name="Peng M."/>
            <person name="Polat A.N."/>
            <person name="Heck A.J."/>
            <person name="Mohammed S."/>
        </authorList>
    </citation>
    <scope>PHOSPHORYLATION [LARGE SCALE ANALYSIS] AT SER-561 AND SER-611</scope>
    <scope>IDENTIFICATION BY MASS SPECTROMETRY [LARGE SCALE ANALYSIS]</scope>
    <source>
        <tissue>Cervix carcinoma</tissue>
        <tissue>Erythroleukemia</tissue>
    </source>
</reference>
<reference key="18">
    <citation type="journal article" date="2014" name="J. Proteomics">
        <title>An enzyme assisted RP-RPLC approach for in-depth analysis of human liver phosphoproteome.</title>
        <authorList>
            <person name="Bian Y."/>
            <person name="Song C."/>
            <person name="Cheng K."/>
            <person name="Dong M."/>
            <person name="Wang F."/>
            <person name="Huang J."/>
            <person name="Sun D."/>
            <person name="Wang L."/>
            <person name="Ye M."/>
            <person name="Zou H."/>
        </authorList>
    </citation>
    <scope>PHOSPHORYLATION [LARGE SCALE ANALYSIS] AT SER-556 AND SER-561</scope>
    <scope>IDENTIFICATION BY MASS SPECTROMETRY [LARGE SCALE ANALYSIS]</scope>
    <source>
        <tissue>Liver</tissue>
    </source>
</reference>
<reference key="19">
    <citation type="journal article" date="2014" name="Proc. Natl. Acad. Sci. U.S.A.">
        <title>Sequential breakdown of 3-phosphorylated phosphoinositides is essential for the completion of macropinocytosis.</title>
        <authorList>
            <person name="Maekawa M."/>
            <person name="Terasaka S."/>
            <person name="Mochizuki Y."/>
            <person name="Kawai K."/>
            <person name="Ikeda Y."/>
            <person name="Araki N."/>
            <person name="Skolnik E.Y."/>
            <person name="Taguchi T."/>
            <person name="Arai H."/>
        </authorList>
    </citation>
    <scope>FUNCTION</scope>
    <scope>CATALYTIC ACTIVITY</scope>
</reference>
<evidence type="ECO:0000250" key="1">
    <source>
        <dbReference type="UniProtKB" id="A0A0G2JXT6"/>
    </source>
</evidence>
<evidence type="ECO:0000250" key="2">
    <source>
        <dbReference type="UniProtKB" id="Q13614"/>
    </source>
</evidence>
<evidence type="ECO:0000250" key="3">
    <source>
        <dbReference type="UniProtKB" id="Q8VE11"/>
    </source>
</evidence>
<evidence type="ECO:0000255" key="4"/>
<evidence type="ECO:0000255" key="5">
    <source>
        <dbReference type="PROSITE-ProRule" id="PRU00669"/>
    </source>
</evidence>
<evidence type="ECO:0000255" key="6">
    <source>
        <dbReference type="PROSITE-ProRule" id="PRU10044"/>
    </source>
</evidence>
<evidence type="ECO:0000269" key="7">
    <source>
    </source>
</evidence>
<evidence type="ECO:0000269" key="8">
    <source>
    </source>
</evidence>
<evidence type="ECO:0000269" key="9">
    <source>
    </source>
</evidence>
<evidence type="ECO:0000269" key="10">
    <source>
    </source>
</evidence>
<evidence type="ECO:0000269" key="11">
    <source>
    </source>
</evidence>
<evidence type="ECO:0000269" key="12">
    <source>
    </source>
</evidence>
<evidence type="ECO:0000269" key="13">
    <source>
    </source>
</evidence>
<evidence type="ECO:0000269" key="14">
    <source>
    </source>
</evidence>
<evidence type="ECO:0000269" key="15">
    <source>
    </source>
</evidence>
<evidence type="ECO:0000269" key="16">
    <source>
    </source>
</evidence>
<evidence type="ECO:0000269" key="17">
    <source>
    </source>
</evidence>
<evidence type="ECO:0000269" key="18">
    <source>
    </source>
</evidence>
<evidence type="ECO:0000269" key="19">
    <source>
    </source>
</evidence>
<evidence type="ECO:0000269" key="20">
    <source>
    </source>
</evidence>
<evidence type="ECO:0000269" key="21">
    <source ref="2"/>
</evidence>
<evidence type="ECO:0000303" key="22">
    <source>
    </source>
</evidence>
<evidence type="ECO:0000305" key="23"/>
<evidence type="ECO:0000305" key="24">
    <source>
    </source>
</evidence>
<evidence type="ECO:0000305" key="25">
    <source>
    </source>
</evidence>
<evidence type="ECO:0000312" key="26">
    <source>
        <dbReference type="HGNC" id="HGNC:7453"/>
    </source>
</evidence>
<evidence type="ECO:0007744" key="27">
    <source>
    </source>
</evidence>
<evidence type="ECO:0007744" key="28">
    <source>
    </source>
</evidence>
<evidence type="ECO:0007744" key="29">
    <source>
    </source>
</evidence>
<evidence type="ECO:0007829" key="30">
    <source>
        <dbReference type="PDB" id="2YF0"/>
    </source>
</evidence>
<proteinExistence type="evidence at protein level"/>
<name>MTMR6_HUMAN</name>
<protein>
    <recommendedName>
        <fullName evidence="24">Phosphatidylinositol-3,5-bisphosphate 3-phosphatase MTMR6</fullName>
        <ecNumber evidence="16">3.1.3.95</ecNumber>
    </recommendedName>
    <alternativeName>
        <fullName evidence="26">Myotubularin-related protein 6</fullName>
    </alternativeName>
    <alternativeName>
        <fullName evidence="24">Phosphatidylinositol-3-phosphate phosphatase</fullName>
    </alternativeName>
</protein>
<feature type="chain" id="PRO_0000094939" description="Phosphatidylinositol-3,5-bisphosphate 3-phosphatase MTMR6">
    <location>
        <begin position="1"/>
        <end position="621"/>
    </location>
</feature>
<feature type="domain" description="GRAM" evidence="4">
    <location>
        <begin position="1"/>
        <end position="101"/>
    </location>
</feature>
<feature type="domain" description="Myotubularin phosphatase" evidence="5">
    <location>
        <begin position="124"/>
        <end position="499"/>
    </location>
</feature>
<feature type="region of interest" description="Interaction with RAB1B" evidence="3">
    <location>
        <begin position="2"/>
        <end position="141"/>
    </location>
</feature>
<feature type="active site" description="Phosphocysteine intermediate" evidence="6">
    <location>
        <position position="336"/>
    </location>
</feature>
<feature type="binding site" evidence="2">
    <location>
        <position position="248"/>
    </location>
    <ligand>
        <name>a 1,2-diacyl-sn-glycero-3-phospho-(1D-myo-inositol-3,5-bisphosphate)</name>
        <dbReference type="ChEBI" id="CHEBI:57923"/>
    </ligand>
</feature>
<feature type="binding site" evidence="2">
    <location>
        <position position="248"/>
    </location>
    <ligand>
        <name>a 1,2-diacyl-sn-glycero-3-phospho-(1D-myo-inositol-3-phosphate)</name>
        <dbReference type="ChEBI" id="CHEBI:58088"/>
    </ligand>
</feature>
<feature type="binding site" evidence="2">
    <location>
        <position position="273"/>
    </location>
    <ligand>
        <name>a 1,2-diacyl-sn-glycero-3-phospho-(1D-myo-inositol-3,5-bisphosphate)</name>
        <dbReference type="ChEBI" id="CHEBI:57923"/>
    </ligand>
</feature>
<feature type="binding site" evidence="2">
    <location>
        <position position="273"/>
    </location>
    <ligand>
        <name>a 1,2-diacyl-sn-glycero-3-phospho-(1D-myo-inositol-3-phosphate)</name>
        <dbReference type="ChEBI" id="CHEBI:58088"/>
    </ligand>
</feature>
<feature type="binding site" evidence="2">
    <location>
        <position position="274"/>
    </location>
    <ligand>
        <name>a 1,2-diacyl-sn-glycero-3-phospho-(1D-myo-inositol-3,5-bisphosphate)</name>
        <dbReference type="ChEBI" id="CHEBI:57923"/>
    </ligand>
</feature>
<feature type="binding site" evidence="2">
    <location>
        <position position="274"/>
    </location>
    <ligand>
        <name>a 1,2-diacyl-sn-glycero-3-phospho-(1D-myo-inositol-3-phosphate)</name>
        <dbReference type="ChEBI" id="CHEBI:58088"/>
    </ligand>
</feature>
<feature type="binding site" evidence="2">
    <location>
        <position position="337"/>
    </location>
    <ligand>
        <name>a 1,2-diacyl-sn-glycero-3-phospho-(1D-myo-inositol-3,5-bisphosphate)</name>
        <dbReference type="ChEBI" id="CHEBI:57923"/>
    </ligand>
</feature>
<feature type="binding site" evidence="2">
    <location>
        <position position="337"/>
    </location>
    <ligand>
        <name>a 1,2-diacyl-sn-glycero-3-phospho-(1D-myo-inositol-3-phosphate)</name>
        <dbReference type="ChEBI" id="CHEBI:58088"/>
    </ligand>
</feature>
<feature type="binding site" evidence="2">
    <location>
        <position position="338"/>
    </location>
    <ligand>
        <name>a 1,2-diacyl-sn-glycero-3-phospho-(1D-myo-inositol-3,5-bisphosphate)</name>
        <dbReference type="ChEBI" id="CHEBI:57923"/>
    </ligand>
</feature>
<feature type="binding site" evidence="2">
    <location>
        <position position="338"/>
    </location>
    <ligand>
        <name>a 1,2-diacyl-sn-glycero-3-phospho-(1D-myo-inositol-3-phosphate)</name>
        <dbReference type="ChEBI" id="CHEBI:58088"/>
    </ligand>
</feature>
<feature type="binding site" evidence="2">
    <location>
        <position position="339"/>
    </location>
    <ligand>
        <name>a 1,2-diacyl-sn-glycero-3-phospho-(1D-myo-inositol-3,5-bisphosphate)</name>
        <dbReference type="ChEBI" id="CHEBI:57923"/>
    </ligand>
</feature>
<feature type="binding site" evidence="2">
    <location>
        <position position="339"/>
    </location>
    <ligand>
        <name>a 1,2-diacyl-sn-glycero-3-phospho-(1D-myo-inositol-3-phosphate)</name>
        <dbReference type="ChEBI" id="CHEBI:58088"/>
    </ligand>
</feature>
<feature type="binding site" evidence="2">
    <location>
        <position position="340"/>
    </location>
    <ligand>
        <name>a 1,2-diacyl-sn-glycero-3-phospho-(1D-myo-inositol-3,5-bisphosphate)</name>
        <dbReference type="ChEBI" id="CHEBI:57923"/>
    </ligand>
</feature>
<feature type="binding site" evidence="2">
    <location>
        <position position="340"/>
    </location>
    <ligand>
        <name>a 1,2-diacyl-sn-glycero-3-phospho-(1D-myo-inositol-3-phosphate)</name>
        <dbReference type="ChEBI" id="CHEBI:58088"/>
    </ligand>
</feature>
<feature type="binding site" evidence="2">
    <location>
        <position position="341"/>
    </location>
    <ligand>
        <name>a 1,2-diacyl-sn-glycero-3-phospho-(1D-myo-inositol-3,5-bisphosphate)</name>
        <dbReference type="ChEBI" id="CHEBI:57923"/>
    </ligand>
</feature>
<feature type="binding site" evidence="2">
    <location>
        <position position="341"/>
    </location>
    <ligand>
        <name>a 1,2-diacyl-sn-glycero-3-phospho-(1D-myo-inositol-3-phosphate)</name>
        <dbReference type="ChEBI" id="CHEBI:58088"/>
    </ligand>
</feature>
<feature type="binding site" evidence="2">
    <location>
        <position position="342"/>
    </location>
    <ligand>
        <name>a 1,2-diacyl-sn-glycero-3-phospho-(1D-myo-inositol-3,5-bisphosphate)</name>
        <dbReference type="ChEBI" id="CHEBI:57923"/>
    </ligand>
</feature>
<feature type="binding site" evidence="2">
    <location>
        <position position="342"/>
    </location>
    <ligand>
        <name>a 1,2-diacyl-sn-glycero-3-phospho-(1D-myo-inositol-3-phosphate)</name>
        <dbReference type="ChEBI" id="CHEBI:58088"/>
    </ligand>
</feature>
<feature type="binding site" evidence="2">
    <location>
        <position position="378"/>
    </location>
    <ligand>
        <name>a 1,2-diacyl-sn-glycero-3-phospho-(1D-myo-inositol-3,5-bisphosphate)</name>
        <dbReference type="ChEBI" id="CHEBI:57923"/>
    </ligand>
</feature>
<feature type="binding site" evidence="2">
    <location>
        <position position="382"/>
    </location>
    <ligand>
        <name>a 1,2-diacyl-sn-glycero-3-phospho-(1D-myo-inositol-3,5-bisphosphate)</name>
        <dbReference type="ChEBI" id="CHEBI:57923"/>
    </ligand>
</feature>
<feature type="binding site" evidence="2">
    <location>
        <position position="382"/>
    </location>
    <ligand>
        <name>a 1,2-diacyl-sn-glycero-3-phospho-(1D-myo-inositol-3-phosphate)</name>
        <dbReference type="ChEBI" id="CHEBI:58088"/>
    </ligand>
</feature>
<feature type="modified residue" description="Phosphotyrosine" evidence="3">
    <location>
        <position position="108"/>
    </location>
</feature>
<feature type="modified residue" description="Phosphoserine" evidence="29">
    <location>
        <position position="556"/>
    </location>
</feature>
<feature type="modified residue" description="Phosphoserine" evidence="27 28 29">
    <location>
        <position position="561"/>
    </location>
</feature>
<feature type="modified residue" description="Phosphoserine" evidence="27">
    <location>
        <position position="589"/>
    </location>
</feature>
<feature type="modified residue" description="Phosphoserine" evidence="28">
    <location>
        <position position="611"/>
    </location>
</feature>
<feature type="splice variant" id="VSP_036614" description="In isoform 2." evidence="22">
    <original>KIKQRKNKQTDGI</original>
    <variation>LTSYSSFKIIVGQ</variation>
    <location>
        <begin position="536"/>
        <end position="548"/>
    </location>
</feature>
<feature type="splice variant" id="VSP_036615" description="In isoform 2." evidence="22">
    <location>
        <begin position="549"/>
        <end position="621"/>
    </location>
</feature>
<feature type="sequence variant" id="VAR_057143" description="In dbSNP:rs34885345.">
    <original>A</original>
    <variation>T</variation>
    <location>
        <position position="131"/>
    </location>
</feature>
<feature type="sequence variant" id="VAR_024583" description="In dbSNP:rs7995033." evidence="9 10 14 20 21">
    <original>I</original>
    <variation>V</variation>
    <location>
        <position position="319"/>
    </location>
</feature>
<feature type="sequence conflict" description="In Ref. 4; CAD89918." evidence="23" ref="4">
    <original>H</original>
    <variation>R</variation>
    <location>
        <position position="89"/>
    </location>
</feature>
<feature type="sequence conflict" description="In Ref. 3; BAG37162." evidence="23" ref="3">
    <original>P</original>
    <variation>S</variation>
    <location>
        <position position="114"/>
    </location>
</feature>
<feature type="sequence conflict" description="In Ref. 4; CAD89918." evidence="23" ref="4">
    <original>W</original>
    <variation>R</variation>
    <location>
        <position position="125"/>
    </location>
</feature>
<feature type="sequence conflict" description="In Ref. 2; AAL01037 and 7; AAC78841." evidence="23" ref="2 7">
    <original>L</original>
    <variation>S</variation>
    <location>
        <position position="333"/>
    </location>
</feature>
<feature type="sequence conflict" description="In Ref. 3; BAG37162." evidence="23" ref="3">
    <original>I</original>
    <variation>T</variation>
    <location>
        <position position="368"/>
    </location>
</feature>
<feature type="sequence conflict" description="In Ref. 3; BAG52676." evidence="23" ref="3">
    <original>H</original>
    <variation>D</variation>
    <location>
        <position position="430"/>
    </location>
</feature>
<feature type="sequence conflict" description="In Ref. 2; AAL01037 and 7; AAC78841." evidence="23" ref="2 7">
    <original>Q</original>
    <variation>P</variation>
    <location>
        <position position="442"/>
    </location>
</feature>
<feature type="strand" evidence="30">
    <location>
        <begin position="5"/>
        <end position="11"/>
    </location>
</feature>
<feature type="strand" evidence="30">
    <location>
        <begin position="26"/>
        <end position="31"/>
    </location>
</feature>
<feature type="strand" evidence="30">
    <location>
        <begin position="33"/>
        <end position="43"/>
    </location>
</feature>
<feature type="strand" evidence="30">
    <location>
        <begin position="45"/>
        <end position="49"/>
    </location>
</feature>
<feature type="helix" evidence="30">
    <location>
        <begin position="50"/>
        <end position="52"/>
    </location>
</feature>
<feature type="strand" evidence="30">
    <location>
        <begin position="53"/>
        <end position="58"/>
    </location>
</feature>
<feature type="strand" evidence="30">
    <location>
        <begin position="65"/>
        <end position="72"/>
    </location>
</feature>
<feature type="strand" evidence="30">
    <location>
        <begin position="77"/>
        <end position="83"/>
    </location>
</feature>
<feature type="helix" evidence="30">
    <location>
        <begin position="85"/>
        <end position="98"/>
    </location>
</feature>
<feature type="helix" evidence="30">
    <location>
        <begin position="108"/>
        <end position="110"/>
    </location>
</feature>
<feature type="helix" evidence="30">
    <location>
        <begin position="119"/>
        <end position="125"/>
    </location>
</feature>
<feature type="helix" evidence="30">
    <location>
        <begin position="130"/>
        <end position="136"/>
    </location>
</feature>
<feature type="strand" evidence="30">
    <location>
        <begin position="140"/>
        <end position="147"/>
    </location>
</feature>
<feature type="helix" evidence="30">
    <location>
        <begin position="148"/>
        <end position="150"/>
    </location>
</feature>
<feature type="strand" evidence="30">
    <location>
        <begin position="157"/>
        <end position="159"/>
    </location>
</feature>
<feature type="strand" evidence="30">
    <location>
        <begin position="161"/>
        <end position="169"/>
    </location>
</feature>
<feature type="helix" evidence="30">
    <location>
        <begin position="171"/>
        <end position="180"/>
    </location>
</feature>
<feature type="helix" evidence="30">
    <location>
        <begin position="182"/>
        <end position="184"/>
    </location>
</feature>
<feature type="strand" evidence="30">
    <location>
        <begin position="188"/>
        <end position="192"/>
    </location>
</feature>
<feature type="turn" evidence="30">
    <location>
        <begin position="194"/>
        <end position="196"/>
    </location>
</feature>
<feature type="strand" evidence="30">
    <location>
        <begin position="199"/>
        <end position="202"/>
    </location>
</feature>
<feature type="helix" evidence="30">
    <location>
        <begin position="215"/>
        <end position="227"/>
    </location>
</feature>
<feature type="strand" evidence="30">
    <location>
        <begin position="234"/>
        <end position="238"/>
    </location>
</feature>
<feature type="turn" evidence="30">
    <location>
        <begin position="258"/>
        <end position="260"/>
    </location>
</feature>
<feature type="strand" evidence="30">
    <location>
        <begin position="264"/>
        <end position="268"/>
    </location>
</feature>
<feature type="helix" evidence="30">
    <location>
        <begin position="274"/>
        <end position="288"/>
    </location>
</feature>
<feature type="helix" evidence="30">
    <location>
        <begin position="295"/>
        <end position="304"/>
    </location>
</feature>
<feature type="helix" evidence="30">
    <location>
        <begin position="307"/>
        <end position="326"/>
    </location>
</feature>
<feature type="strand" evidence="30">
    <location>
        <begin position="332"/>
        <end position="334"/>
    </location>
</feature>
<feature type="turn" evidence="30">
    <location>
        <begin position="336"/>
        <end position="338"/>
    </location>
</feature>
<feature type="strand" evidence="30">
    <location>
        <begin position="339"/>
        <end position="341"/>
    </location>
</feature>
<feature type="helix" evidence="30">
    <location>
        <begin position="342"/>
        <end position="354"/>
    </location>
</feature>
<feature type="helix" evidence="30">
    <location>
        <begin position="357"/>
        <end position="359"/>
    </location>
</feature>
<feature type="helix" evidence="30">
    <location>
        <begin position="361"/>
        <end position="371"/>
    </location>
</feature>
<feature type="turn" evidence="30">
    <location>
        <begin position="372"/>
        <end position="376"/>
    </location>
</feature>
<feature type="helix" evidence="30">
    <location>
        <begin position="379"/>
        <end position="383"/>
    </location>
</feature>
<feature type="strand" evidence="30">
    <location>
        <begin position="385"/>
        <end position="387"/>
    </location>
</feature>
<feature type="helix" evidence="30">
    <location>
        <begin position="390"/>
        <end position="392"/>
    </location>
</feature>
<feature type="helix" evidence="30">
    <location>
        <begin position="396"/>
        <end position="410"/>
    </location>
</feature>
<feature type="turn" evidence="30">
    <location>
        <begin position="412"/>
        <end position="414"/>
    </location>
</feature>
<feature type="helix" evidence="30">
    <location>
        <begin position="419"/>
        <end position="429"/>
    </location>
</feature>
<feature type="turn" evidence="30">
    <location>
        <begin position="430"/>
        <end position="432"/>
    </location>
</feature>
<feature type="strand" evidence="30">
    <location>
        <begin position="439"/>
        <end position="441"/>
    </location>
</feature>
<feature type="helix" evidence="30">
    <location>
        <begin position="442"/>
        <end position="447"/>
    </location>
</feature>
<feature type="helix" evidence="30">
    <location>
        <begin position="450"/>
        <end position="453"/>
    </location>
</feature>
<feature type="helix" evidence="30">
    <location>
        <begin position="458"/>
        <end position="461"/>
    </location>
</feature>
<feature type="helix" evidence="30">
    <location>
        <begin position="465"/>
        <end position="468"/>
    </location>
</feature>
<feature type="strand" evidence="30">
    <location>
        <begin position="488"/>
        <end position="491"/>
    </location>
</feature>
<feature type="helix" evidence="30">
    <location>
        <begin position="496"/>
        <end position="502"/>
    </location>
</feature>
<dbReference type="EC" id="3.1.3.95" evidence="16"/>
<dbReference type="EMBL" id="AF406619">
    <property type="protein sequence ID" value="AAL01037.1"/>
    <property type="molecule type" value="mRNA"/>
</dbReference>
<dbReference type="EMBL" id="AK093237">
    <property type="protein sequence ID" value="BAG52676.1"/>
    <property type="molecule type" value="mRNA"/>
</dbReference>
<dbReference type="EMBL" id="AK314587">
    <property type="protein sequence ID" value="BAG37162.1"/>
    <property type="molecule type" value="mRNA"/>
</dbReference>
<dbReference type="EMBL" id="AL832017">
    <property type="protein sequence ID" value="CAD89918.1"/>
    <property type="molecule type" value="mRNA"/>
</dbReference>
<dbReference type="EMBL" id="AL590787">
    <property type="status" value="NOT_ANNOTATED_CDS"/>
    <property type="molecule type" value="Genomic_DNA"/>
</dbReference>
<dbReference type="EMBL" id="BC040012">
    <property type="protein sequence ID" value="AAH40012.1"/>
    <property type="molecule type" value="mRNA"/>
</dbReference>
<dbReference type="EMBL" id="AF072928">
    <property type="protein sequence ID" value="AAC78841.1"/>
    <property type="molecule type" value="mRNA"/>
</dbReference>
<dbReference type="CCDS" id="CCDS9313.1">
    <molecule id="Q9Y217-1"/>
</dbReference>
<dbReference type="RefSeq" id="NP_004676.3">
    <molecule id="Q9Y217-1"/>
    <property type="nucleotide sequence ID" value="NM_004685.3"/>
</dbReference>
<dbReference type="PDB" id="2YF0">
    <property type="method" value="X-ray"/>
    <property type="resolution" value="2.65 A"/>
    <property type="chains" value="A=1-505"/>
</dbReference>
<dbReference type="PDBsum" id="2YF0"/>
<dbReference type="SMR" id="Q9Y217"/>
<dbReference type="BioGRID" id="114558">
    <property type="interactions" value="93"/>
</dbReference>
<dbReference type="FunCoup" id="Q9Y217">
    <property type="interactions" value="1654"/>
</dbReference>
<dbReference type="IntAct" id="Q9Y217">
    <property type="interactions" value="50"/>
</dbReference>
<dbReference type="MINT" id="Q9Y217"/>
<dbReference type="STRING" id="9606.ENSP00000371221"/>
<dbReference type="SwissLipids" id="SLP:000001133"/>
<dbReference type="DEPOD" id="MTMR6"/>
<dbReference type="GlyCosmos" id="Q9Y217">
    <property type="glycosylation" value="2 sites, 1 glycan"/>
</dbReference>
<dbReference type="GlyGen" id="Q9Y217">
    <property type="glycosylation" value="3 sites, 1 N-linked glycan (1 site), 1 O-linked glycan (2 sites)"/>
</dbReference>
<dbReference type="iPTMnet" id="Q9Y217"/>
<dbReference type="PhosphoSitePlus" id="Q9Y217"/>
<dbReference type="BioMuta" id="MTMR6"/>
<dbReference type="DMDM" id="317373414"/>
<dbReference type="jPOST" id="Q9Y217"/>
<dbReference type="MassIVE" id="Q9Y217"/>
<dbReference type="PaxDb" id="9606-ENSP00000371221"/>
<dbReference type="PeptideAtlas" id="Q9Y217"/>
<dbReference type="ProteomicsDB" id="85593">
    <molecule id="Q9Y217-1"/>
</dbReference>
<dbReference type="ProteomicsDB" id="85594">
    <molecule id="Q9Y217-2"/>
</dbReference>
<dbReference type="Pumba" id="Q9Y217"/>
<dbReference type="TopDownProteomics" id="Q9Y217-1">
    <molecule id="Q9Y217-1"/>
</dbReference>
<dbReference type="Antibodypedia" id="22544">
    <property type="antibodies" value="135 antibodies from 25 providers"/>
</dbReference>
<dbReference type="DNASU" id="9107"/>
<dbReference type="Ensembl" id="ENST00000381801.6">
    <molecule id="Q9Y217-1"/>
    <property type="protein sequence ID" value="ENSP00000371221.5"/>
    <property type="gene ID" value="ENSG00000139505.13"/>
</dbReference>
<dbReference type="GeneID" id="9107"/>
<dbReference type="KEGG" id="hsa:9107"/>
<dbReference type="MANE-Select" id="ENST00000381801.6">
    <property type="protein sequence ID" value="ENSP00000371221.5"/>
    <property type="RefSeq nucleotide sequence ID" value="NM_004685.5"/>
    <property type="RefSeq protein sequence ID" value="NP_004676.3"/>
</dbReference>
<dbReference type="UCSC" id="uc001uqf.6">
    <molecule id="Q9Y217-1"/>
    <property type="organism name" value="human"/>
</dbReference>
<dbReference type="AGR" id="HGNC:7453"/>
<dbReference type="CTD" id="9107"/>
<dbReference type="DisGeNET" id="9107"/>
<dbReference type="GeneCards" id="MTMR6"/>
<dbReference type="HGNC" id="HGNC:7453">
    <property type="gene designation" value="MTMR6"/>
</dbReference>
<dbReference type="HPA" id="ENSG00000139505">
    <property type="expression patterns" value="Low tissue specificity"/>
</dbReference>
<dbReference type="MIM" id="603561">
    <property type="type" value="gene"/>
</dbReference>
<dbReference type="neXtProt" id="NX_Q9Y217"/>
<dbReference type="OpenTargets" id="ENSG00000139505"/>
<dbReference type="PharmGKB" id="PA31256"/>
<dbReference type="VEuPathDB" id="HostDB:ENSG00000139505"/>
<dbReference type="eggNOG" id="KOG1089">
    <property type="taxonomic scope" value="Eukaryota"/>
</dbReference>
<dbReference type="GeneTree" id="ENSGT00940000158055"/>
<dbReference type="HOGENOM" id="CLU_001839_3_2_1"/>
<dbReference type="InParanoid" id="Q9Y217"/>
<dbReference type="OMA" id="QWQHTDV"/>
<dbReference type="OrthoDB" id="271628at2759"/>
<dbReference type="PAN-GO" id="Q9Y217">
    <property type="GO annotations" value="6 GO annotations based on evolutionary models"/>
</dbReference>
<dbReference type="PhylomeDB" id="Q9Y217"/>
<dbReference type="TreeFam" id="TF315197"/>
<dbReference type="BRENDA" id="3.1.3.95">
    <property type="organism ID" value="2681"/>
</dbReference>
<dbReference type="PathwayCommons" id="Q9Y217"/>
<dbReference type="Reactome" id="R-HSA-1660499">
    <property type="pathway name" value="Synthesis of PIPs at the plasma membrane"/>
</dbReference>
<dbReference type="SignaLink" id="Q9Y217"/>
<dbReference type="BioGRID-ORCS" id="9107">
    <property type="hits" value="33 hits in 1175 CRISPR screens"/>
</dbReference>
<dbReference type="ChiTaRS" id="MTMR6">
    <property type="organism name" value="human"/>
</dbReference>
<dbReference type="EvolutionaryTrace" id="Q9Y217"/>
<dbReference type="GeneWiki" id="MTMR6"/>
<dbReference type="GenomeRNAi" id="9107"/>
<dbReference type="Pharos" id="Q9Y217">
    <property type="development level" value="Tbio"/>
</dbReference>
<dbReference type="PRO" id="PR:Q9Y217"/>
<dbReference type="Proteomes" id="UP000005640">
    <property type="component" value="Chromosome 13"/>
</dbReference>
<dbReference type="RNAct" id="Q9Y217">
    <property type="molecule type" value="protein"/>
</dbReference>
<dbReference type="Bgee" id="ENSG00000139505">
    <property type="expression patterns" value="Expressed in endothelial cell and 206 other cell types or tissues"/>
</dbReference>
<dbReference type="GO" id="GO:0005737">
    <property type="term" value="C:cytoplasm"/>
    <property type="evidence" value="ECO:0000314"/>
    <property type="project" value="UniProtKB"/>
</dbReference>
<dbReference type="GO" id="GO:0005829">
    <property type="term" value="C:cytosol"/>
    <property type="evidence" value="ECO:0000304"/>
    <property type="project" value="Reactome"/>
</dbReference>
<dbReference type="GO" id="GO:0005783">
    <property type="term" value="C:endoplasmic reticulum"/>
    <property type="evidence" value="ECO:0007669"/>
    <property type="project" value="UniProtKB-SubCell"/>
</dbReference>
<dbReference type="GO" id="GO:0005793">
    <property type="term" value="C:endoplasmic reticulum-Golgi intermediate compartment"/>
    <property type="evidence" value="ECO:0007669"/>
    <property type="project" value="UniProtKB-SubCell"/>
</dbReference>
<dbReference type="GO" id="GO:0005635">
    <property type="term" value="C:nuclear envelope"/>
    <property type="evidence" value="ECO:0000314"/>
    <property type="project" value="UniProtKB"/>
</dbReference>
<dbReference type="GO" id="GO:0048471">
    <property type="term" value="C:perinuclear region of cytoplasm"/>
    <property type="evidence" value="ECO:0007669"/>
    <property type="project" value="UniProtKB-SubCell"/>
</dbReference>
<dbReference type="GO" id="GO:0032587">
    <property type="term" value="C:ruffle membrane"/>
    <property type="evidence" value="ECO:0007669"/>
    <property type="project" value="UniProtKB-SubCell"/>
</dbReference>
<dbReference type="GO" id="GO:0052629">
    <property type="term" value="F:phosphatidylinositol-3,5-bisphosphate 3-phosphatase activity"/>
    <property type="evidence" value="ECO:0000304"/>
    <property type="project" value="Reactome"/>
</dbReference>
<dbReference type="GO" id="GO:0106018">
    <property type="term" value="F:phosphatidylinositol-3,5-bisphosphate phosphatase activity"/>
    <property type="evidence" value="ECO:0000314"/>
    <property type="project" value="UniProtKB"/>
</dbReference>
<dbReference type="GO" id="GO:0004438">
    <property type="term" value="F:phosphatidylinositol-3-phosphate phosphatase activity"/>
    <property type="evidence" value="ECO:0000314"/>
    <property type="project" value="UniProtKB"/>
</dbReference>
<dbReference type="GO" id="GO:0004722">
    <property type="term" value="F:protein serine/threonine phosphatase activity"/>
    <property type="evidence" value="ECO:0000303"/>
    <property type="project" value="UniProtKB"/>
</dbReference>
<dbReference type="GO" id="GO:0004725">
    <property type="term" value="F:protein tyrosine phosphatase activity"/>
    <property type="evidence" value="ECO:0000303"/>
    <property type="project" value="UniProtKB"/>
</dbReference>
<dbReference type="GO" id="GO:0006897">
    <property type="term" value="P:endocytosis"/>
    <property type="evidence" value="ECO:0007669"/>
    <property type="project" value="UniProtKB-KW"/>
</dbReference>
<dbReference type="GO" id="GO:0006661">
    <property type="term" value="P:phosphatidylinositol biosynthetic process"/>
    <property type="evidence" value="ECO:0000304"/>
    <property type="project" value="Reactome"/>
</dbReference>
<dbReference type="GO" id="GO:0046856">
    <property type="term" value="P:phosphatidylinositol dephosphorylation"/>
    <property type="evidence" value="ECO:0000314"/>
    <property type="project" value="UniProtKB"/>
</dbReference>
<dbReference type="GO" id="GO:0006470">
    <property type="term" value="P:protein dephosphorylation"/>
    <property type="evidence" value="ECO:0000303"/>
    <property type="project" value="UniProtKB"/>
</dbReference>
<dbReference type="CDD" id="cd13343">
    <property type="entry name" value="PH-GRAM_MTMR6"/>
    <property type="match status" value="1"/>
</dbReference>
<dbReference type="CDD" id="cd14585">
    <property type="entry name" value="PTP-MTMR6"/>
    <property type="match status" value="1"/>
</dbReference>
<dbReference type="FunFam" id="2.30.29.30:FF:000135">
    <property type="entry name" value="Myotubularin related protein 6"/>
    <property type="match status" value="1"/>
</dbReference>
<dbReference type="Gene3D" id="2.30.29.30">
    <property type="entry name" value="Pleckstrin-homology domain (PH domain)/Phosphotyrosine-binding domain (PTB)"/>
    <property type="match status" value="1"/>
</dbReference>
<dbReference type="InterPro" id="IPR035998">
    <property type="entry name" value="MTMR6_PH-GRAM"/>
</dbReference>
<dbReference type="InterPro" id="IPR030564">
    <property type="entry name" value="Myotubularin"/>
</dbReference>
<dbReference type="InterPro" id="IPR010569">
    <property type="entry name" value="Myotubularin-like_Pase_dom"/>
</dbReference>
<dbReference type="InterPro" id="IPR011993">
    <property type="entry name" value="PH-like_dom_sf"/>
</dbReference>
<dbReference type="InterPro" id="IPR029021">
    <property type="entry name" value="Prot-tyrosine_phosphatase-like"/>
</dbReference>
<dbReference type="InterPro" id="IPR016130">
    <property type="entry name" value="Tyr_Pase_AS"/>
</dbReference>
<dbReference type="InterPro" id="IPR003595">
    <property type="entry name" value="Tyr_Pase_cat"/>
</dbReference>
<dbReference type="PANTHER" id="PTHR10807">
    <property type="entry name" value="MYOTUBULARIN-RELATED"/>
    <property type="match status" value="1"/>
</dbReference>
<dbReference type="PANTHER" id="PTHR10807:SF34">
    <property type="entry name" value="MYOTUBULARIN-RELATED PROTEIN 6"/>
    <property type="match status" value="1"/>
</dbReference>
<dbReference type="Pfam" id="PF06602">
    <property type="entry name" value="Myotub-related"/>
    <property type="match status" value="1"/>
</dbReference>
<dbReference type="Pfam" id="PF21098">
    <property type="entry name" value="PH-GRAM_MTMR6-like"/>
    <property type="match status" value="1"/>
</dbReference>
<dbReference type="SMART" id="SM00404">
    <property type="entry name" value="PTPc_motif"/>
    <property type="match status" value="1"/>
</dbReference>
<dbReference type="SUPFAM" id="SSF52799">
    <property type="entry name" value="(Phosphotyrosine protein) phosphatases II"/>
    <property type="match status" value="1"/>
</dbReference>
<dbReference type="SUPFAM" id="SSF50729">
    <property type="entry name" value="PH domain-like"/>
    <property type="match status" value="1"/>
</dbReference>
<dbReference type="PROSITE" id="PS51339">
    <property type="entry name" value="PPASE_MYOTUBULARIN"/>
    <property type="match status" value="1"/>
</dbReference>
<dbReference type="PROSITE" id="PS00383">
    <property type="entry name" value="TYR_PHOSPHATASE_1"/>
    <property type="match status" value="1"/>
</dbReference>
<gene>
    <name evidence="26" type="primary">MTMR6</name>
</gene>
<organism>
    <name type="scientific">Homo sapiens</name>
    <name type="common">Human</name>
    <dbReference type="NCBI Taxonomy" id="9606"/>
    <lineage>
        <taxon>Eukaryota</taxon>
        <taxon>Metazoa</taxon>
        <taxon>Chordata</taxon>
        <taxon>Craniata</taxon>
        <taxon>Vertebrata</taxon>
        <taxon>Euteleostomi</taxon>
        <taxon>Mammalia</taxon>
        <taxon>Eutheria</taxon>
        <taxon>Euarchontoglires</taxon>
        <taxon>Primates</taxon>
        <taxon>Haplorrhini</taxon>
        <taxon>Catarrhini</taxon>
        <taxon>Hominidae</taxon>
        <taxon>Homo</taxon>
    </lineage>
</organism>